<proteinExistence type="inferred from homology"/>
<geneLocation type="chloroplast"/>
<reference key="1">
    <citation type="journal article" date="2002" name="Mol. Biol. Evol.">
        <title>The plastid chromosome of Atropa belladonna and its comparison with that of Nicotiana tabacum: the role of RNA editing in generating divergence in the process of plant speciation.</title>
        <authorList>
            <person name="Schmitz-Linneweber C."/>
            <person name="Regel R."/>
            <person name="Du T.G."/>
            <person name="Hupfer H."/>
            <person name="Herrmann R.G."/>
            <person name="Maier R.M."/>
        </authorList>
    </citation>
    <scope>NUCLEOTIDE SEQUENCE [LARGE SCALE GENOMIC DNA]</scope>
    <source>
        <strain>cv. Ab5p(kan)</strain>
    </source>
</reference>
<gene>
    <name evidence="1" type="primary">rps19</name>
</gene>
<name>RR19_ATRBE</name>
<organism>
    <name type="scientific">Atropa belladonna</name>
    <name type="common">Belladonna</name>
    <name type="synonym">Deadly nightshade</name>
    <dbReference type="NCBI Taxonomy" id="33113"/>
    <lineage>
        <taxon>Eukaryota</taxon>
        <taxon>Viridiplantae</taxon>
        <taxon>Streptophyta</taxon>
        <taxon>Embryophyta</taxon>
        <taxon>Tracheophyta</taxon>
        <taxon>Spermatophyta</taxon>
        <taxon>Magnoliopsida</taxon>
        <taxon>eudicotyledons</taxon>
        <taxon>Gunneridae</taxon>
        <taxon>Pentapetalae</taxon>
        <taxon>asterids</taxon>
        <taxon>lamiids</taxon>
        <taxon>Solanales</taxon>
        <taxon>Solanaceae</taxon>
        <taxon>Solanoideae</taxon>
        <taxon>Hyoscyameae</taxon>
        <taxon>Atropa</taxon>
    </lineage>
</organism>
<protein>
    <recommendedName>
        <fullName evidence="1">Small ribosomal subunit protein uS19c</fullName>
    </recommendedName>
    <alternativeName>
        <fullName evidence="2">30S ribosomal protein S19, chloroplastic</fullName>
    </alternativeName>
</protein>
<dbReference type="EMBL" id="AJ316582">
    <property type="protein sequence ID" value="CAC88084.1"/>
    <property type="molecule type" value="Genomic_DNA"/>
</dbReference>
<dbReference type="RefSeq" id="NP_783271.1">
    <property type="nucleotide sequence ID" value="NC_004561.1"/>
</dbReference>
<dbReference type="SMR" id="Q7FNS1"/>
<dbReference type="GeneID" id="806517"/>
<dbReference type="GO" id="GO:0009507">
    <property type="term" value="C:chloroplast"/>
    <property type="evidence" value="ECO:0007669"/>
    <property type="project" value="UniProtKB-SubCell"/>
</dbReference>
<dbReference type="GO" id="GO:0005763">
    <property type="term" value="C:mitochondrial small ribosomal subunit"/>
    <property type="evidence" value="ECO:0007669"/>
    <property type="project" value="TreeGrafter"/>
</dbReference>
<dbReference type="GO" id="GO:0019843">
    <property type="term" value="F:rRNA binding"/>
    <property type="evidence" value="ECO:0007669"/>
    <property type="project" value="UniProtKB-UniRule"/>
</dbReference>
<dbReference type="GO" id="GO:0003735">
    <property type="term" value="F:structural constituent of ribosome"/>
    <property type="evidence" value="ECO:0007669"/>
    <property type="project" value="InterPro"/>
</dbReference>
<dbReference type="GO" id="GO:0000028">
    <property type="term" value="P:ribosomal small subunit assembly"/>
    <property type="evidence" value="ECO:0007669"/>
    <property type="project" value="TreeGrafter"/>
</dbReference>
<dbReference type="GO" id="GO:0006412">
    <property type="term" value="P:translation"/>
    <property type="evidence" value="ECO:0007669"/>
    <property type="project" value="UniProtKB-UniRule"/>
</dbReference>
<dbReference type="FunFam" id="3.30.860.10:FF:000001">
    <property type="entry name" value="30S ribosomal protein S19"/>
    <property type="match status" value="1"/>
</dbReference>
<dbReference type="Gene3D" id="3.30.860.10">
    <property type="entry name" value="30s Ribosomal Protein S19, Chain A"/>
    <property type="match status" value="1"/>
</dbReference>
<dbReference type="HAMAP" id="MF_00531">
    <property type="entry name" value="Ribosomal_uS19"/>
    <property type="match status" value="1"/>
</dbReference>
<dbReference type="InterPro" id="IPR002222">
    <property type="entry name" value="Ribosomal_uS19"/>
</dbReference>
<dbReference type="InterPro" id="IPR005732">
    <property type="entry name" value="Ribosomal_uS19_bac-type"/>
</dbReference>
<dbReference type="InterPro" id="IPR020934">
    <property type="entry name" value="Ribosomal_uS19_CS"/>
</dbReference>
<dbReference type="InterPro" id="IPR023575">
    <property type="entry name" value="Ribosomal_uS19_SF"/>
</dbReference>
<dbReference type="NCBIfam" id="TIGR01050">
    <property type="entry name" value="rpsS_bact"/>
    <property type="match status" value="1"/>
</dbReference>
<dbReference type="PANTHER" id="PTHR11880">
    <property type="entry name" value="RIBOSOMAL PROTEIN S19P FAMILY MEMBER"/>
    <property type="match status" value="1"/>
</dbReference>
<dbReference type="PANTHER" id="PTHR11880:SF8">
    <property type="entry name" value="SMALL RIBOSOMAL SUBUNIT PROTEIN US19M"/>
    <property type="match status" value="1"/>
</dbReference>
<dbReference type="Pfam" id="PF00203">
    <property type="entry name" value="Ribosomal_S19"/>
    <property type="match status" value="1"/>
</dbReference>
<dbReference type="PIRSF" id="PIRSF002144">
    <property type="entry name" value="Ribosomal_S19"/>
    <property type="match status" value="1"/>
</dbReference>
<dbReference type="PRINTS" id="PR00975">
    <property type="entry name" value="RIBOSOMALS19"/>
</dbReference>
<dbReference type="SUPFAM" id="SSF54570">
    <property type="entry name" value="Ribosomal protein S19"/>
    <property type="match status" value="1"/>
</dbReference>
<dbReference type="PROSITE" id="PS00323">
    <property type="entry name" value="RIBOSOMAL_S19"/>
    <property type="match status" value="1"/>
</dbReference>
<sequence>MTRSLKKNPFVANHLLKKIDKLNTKAEKEIIVTWSRASTIIPTMIGHTIAIHNGKEHLPIYITDSMVGHKLGEFAPTLNFRGHAKSDNRSRR</sequence>
<keyword id="KW-0150">Chloroplast</keyword>
<keyword id="KW-0934">Plastid</keyword>
<keyword id="KW-0687">Ribonucleoprotein</keyword>
<keyword id="KW-0689">Ribosomal protein</keyword>
<keyword id="KW-0694">RNA-binding</keyword>
<keyword id="KW-0699">rRNA-binding</keyword>
<feature type="chain" id="PRO_0000129955" description="Small ribosomal subunit protein uS19c">
    <location>
        <begin position="1"/>
        <end position="92"/>
    </location>
</feature>
<evidence type="ECO:0000255" key="1">
    <source>
        <dbReference type="HAMAP-Rule" id="MF_00531"/>
    </source>
</evidence>
<evidence type="ECO:0000305" key="2"/>
<comment type="function">
    <text evidence="1">Protein S19 forms a complex with S13 that binds strongly to the 16S ribosomal RNA.</text>
</comment>
<comment type="subcellular location">
    <subcellularLocation>
        <location>Plastid</location>
        <location>Chloroplast</location>
    </subcellularLocation>
</comment>
<comment type="similarity">
    <text evidence="1">Belongs to the universal ribosomal protein uS19 family.</text>
</comment>
<accession>Q7FNS1</accession>